<reference key="1">
    <citation type="journal article" date="2007" name="Science">
        <title>Sea anemone genome reveals ancestral eumetazoan gene repertoire and genomic organization.</title>
        <authorList>
            <person name="Putnam N.H."/>
            <person name="Srivastava M."/>
            <person name="Hellsten U."/>
            <person name="Dirks B."/>
            <person name="Chapman J."/>
            <person name="Salamov A."/>
            <person name="Terry A."/>
            <person name="Shapiro H."/>
            <person name="Lindquist E."/>
            <person name="Kapitonov V.V."/>
            <person name="Jurka J."/>
            <person name="Genikhovich G."/>
            <person name="Grigoriev I.V."/>
            <person name="Lucas S.M."/>
            <person name="Steele R.E."/>
            <person name="Finnerty J.R."/>
            <person name="Technau U."/>
            <person name="Martindale M.Q."/>
            <person name="Rokhsar D.S."/>
        </authorList>
    </citation>
    <scope>NUCLEOTIDE SEQUENCE [LARGE SCALE GENOMIC DNA]</scope>
    <source>
        <strain>CH2 X CH6</strain>
    </source>
</reference>
<comment type="function">
    <text evidence="1">Part of the small subunit (SSU) processome, first precursor of the small eukaryotic ribosomal subunit. During the assembly of the SSU processome in the nucleolus, many ribosome biogenesis factors, an RNA chaperone and ribosomal proteins associate with the nascent pre-rRNA and work in concert to generate RNA folding, modifications, rearrangements and cleavage as well as targeted degradation of pre-ribosomal RNA by the RNA exosome. Positively regulates dimethylation of two adjacent adenosines in the loop of a conserved hairpin near the 3'-end of 18S rRNA.</text>
</comment>
<comment type="subunit">
    <text evidence="1">Part of the small subunit (SSU) processome, composed of more than 70 proteins and the RNA chaperone small nucleolar RNA (snoRNA) U3.</text>
</comment>
<comment type="subcellular location">
    <subcellularLocation>
        <location evidence="1">Nucleus</location>
        <location evidence="1">Nucleolus</location>
    </subcellularLocation>
</comment>
<comment type="similarity">
    <text evidence="3">Belongs to the PNO1 family.</text>
</comment>
<feature type="chain" id="PRO_0000327680" description="RNA-binding protein pno1">
    <location>
        <begin position="1"/>
        <end position="238"/>
    </location>
</feature>
<feature type="domain" description="KH">
    <location>
        <begin position="159"/>
        <end position="211"/>
    </location>
</feature>
<feature type="region of interest" description="Disordered" evidence="2">
    <location>
        <begin position="1"/>
        <end position="65"/>
    </location>
</feature>
<feature type="compositionally biased region" description="Basic and acidic residues" evidence="2">
    <location>
        <begin position="8"/>
        <end position="17"/>
    </location>
</feature>
<keyword id="KW-0539">Nucleus</keyword>
<keyword id="KW-1185">Reference proteome</keyword>
<keyword id="KW-0694">RNA-binding</keyword>
<organism>
    <name type="scientific">Nematostella vectensis</name>
    <name type="common">Starlet sea anemone</name>
    <dbReference type="NCBI Taxonomy" id="45351"/>
    <lineage>
        <taxon>Eukaryota</taxon>
        <taxon>Metazoa</taxon>
        <taxon>Cnidaria</taxon>
        <taxon>Anthozoa</taxon>
        <taxon>Hexacorallia</taxon>
        <taxon>Actiniaria</taxon>
        <taxon>Edwardsiidae</taxon>
        <taxon>Nematostella</taxon>
    </lineage>
</organism>
<sequence length="238" mass="26676">MADTSECQSDKTVKEEPFQSVKTRKRRKNDKEEEMDTVESRARPSFPPVKAQKLAGGKSETRKIPVPSHRYTPLKENWMKIFTPVVEHLKLQIRFNLGSRHVEIRASKETSDIGAVQKAADFVQAFILGFEVEDALALIRLDDLFLESFEIADVKPLKGDHLSRAIGRVAGKGGKTKFTIENVTKTRIVLAETKIHILGSFQNIKIARTAICNLILGSPPSKVYGNMRAVASRSAERF</sequence>
<gene>
    <name type="primary">pno1</name>
    <name type="ORF">v1g199995</name>
</gene>
<protein>
    <recommendedName>
        <fullName>RNA-binding protein pno1</fullName>
    </recommendedName>
</protein>
<accession>A7RP64</accession>
<dbReference type="EMBL" id="DS469524">
    <property type="protein sequence ID" value="EDO46805.1"/>
    <property type="molecule type" value="Genomic_DNA"/>
</dbReference>
<dbReference type="RefSeq" id="XP_001638868.1">
    <property type="nucleotide sequence ID" value="XM_001638818.1"/>
</dbReference>
<dbReference type="SMR" id="A7RP64"/>
<dbReference type="FunCoup" id="A7RP64">
    <property type="interactions" value="429"/>
</dbReference>
<dbReference type="STRING" id="45351.A7RP64"/>
<dbReference type="EnsemblMetazoa" id="EDO46805">
    <property type="protein sequence ID" value="EDO46805"/>
    <property type="gene ID" value="NEMVEDRAFT_v1g199995"/>
</dbReference>
<dbReference type="KEGG" id="nve:5518945"/>
<dbReference type="eggNOG" id="KOG3273">
    <property type="taxonomic scope" value="Eukaryota"/>
</dbReference>
<dbReference type="HOGENOM" id="CLU_064992_1_0_1"/>
<dbReference type="InParanoid" id="A7RP64"/>
<dbReference type="OMA" id="KDWVHIF"/>
<dbReference type="OrthoDB" id="1932641at2759"/>
<dbReference type="PhylomeDB" id="A7RP64"/>
<dbReference type="Proteomes" id="UP000001593">
    <property type="component" value="Unassembled WGS sequence"/>
</dbReference>
<dbReference type="GO" id="GO:0005730">
    <property type="term" value="C:nucleolus"/>
    <property type="evidence" value="ECO:0007669"/>
    <property type="project" value="UniProtKB-SubCell"/>
</dbReference>
<dbReference type="GO" id="GO:0005634">
    <property type="term" value="C:nucleus"/>
    <property type="evidence" value="ECO:0000318"/>
    <property type="project" value="GO_Central"/>
</dbReference>
<dbReference type="GO" id="GO:0032040">
    <property type="term" value="C:small-subunit processome"/>
    <property type="evidence" value="ECO:0000250"/>
    <property type="project" value="UniProtKB"/>
</dbReference>
<dbReference type="GO" id="GO:0003723">
    <property type="term" value="F:RNA binding"/>
    <property type="evidence" value="ECO:0007669"/>
    <property type="project" value="UniProtKB-KW"/>
</dbReference>
<dbReference type="GO" id="GO:0042274">
    <property type="term" value="P:ribosomal small subunit biogenesis"/>
    <property type="evidence" value="ECO:0000250"/>
    <property type="project" value="UniProtKB"/>
</dbReference>
<dbReference type="CDD" id="cd22391">
    <property type="entry name" value="KH-I_PNO1_rpt1"/>
    <property type="match status" value="1"/>
</dbReference>
<dbReference type="CDD" id="cd22392">
    <property type="entry name" value="KH-I_PNO1_rpt2"/>
    <property type="match status" value="1"/>
</dbReference>
<dbReference type="FunFam" id="3.30.1370.10:FF:000009">
    <property type="entry name" value="RNA-binding protein PNO1"/>
    <property type="match status" value="1"/>
</dbReference>
<dbReference type="FunFam" id="3.30.1370.10:FF:000048">
    <property type="entry name" value="RNA-binding protein PNO1 isoform X2"/>
    <property type="match status" value="1"/>
</dbReference>
<dbReference type="Gene3D" id="3.30.1370.10">
    <property type="entry name" value="K Homology domain, type 1"/>
    <property type="match status" value="1"/>
</dbReference>
<dbReference type="InterPro" id="IPR055212">
    <property type="entry name" value="KH-I_PNO1_first"/>
</dbReference>
<dbReference type="InterPro" id="IPR004087">
    <property type="entry name" value="KH_dom"/>
</dbReference>
<dbReference type="InterPro" id="IPR036612">
    <property type="entry name" value="KH_dom_type_1_sf"/>
</dbReference>
<dbReference type="InterPro" id="IPR055211">
    <property type="entry name" value="KH_PNO1_2nd"/>
</dbReference>
<dbReference type="PANTHER" id="PTHR12826">
    <property type="entry name" value="RIBONUCLEASE Y"/>
    <property type="match status" value="1"/>
</dbReference>
<dbReference type="PANTHER" id="PTHR12826:SF13">
    <property type="entry name" value="RNA-BINDING PROTEIN PNO1"/>
    <property type="match status" value="1"/>
</dbReference>
<dbReference type="Pfam" id="PF22891">
    <property type="entry name" value="KH_PNO1_2nd"/>
    <property type="match status" value="1"/>
</dbReference>
<dbReference type="SMART" id="SM00322">
    <property type="entry name" value="KH"/>
    <property type="match status" value="1"/>
</dbReference>
<dbReference type="SUPFAM" id="SSF54791">
    <property type="entry name" value="Eukaryotic type KH-domain (KH-domain type I)"/>
    <property type="match status" value="1"/>
</dbReference>
<name>PNO1_NEMVE</name>
<evidence type="ECO:0000250" key="1">
    <source>
        <dbReference type="UniProtKB" id="Q9NRX1"/>
    </source>
</evidence>
<evidence type="ECO:0000256" key="2">
    <source>
        <dbReference type="SAM" id="MobiDB-lite"/>
    </source>
</evidence>
<evidence type="ECO:0000305" key="3"/>
<proteinExistence type="inferred from homology"/>